<name>ATG14_GIBZE</name>
<sequence>MDCDICHRSHDAKRLPFLCTVDARAALYDGRIENVMALIENEDLQKQISDLLDETNAPTKDRKDALQAQQRTAEDRTTQILAAADKLRNDIKAAKEEIQTRRAALSRRKSDIAAVSDGLIERRVKRQKSVERETGMHKYRWTKCADELARTRSFLCIEAAQLYGLKRIKEGSPSKYEYYLGGIPVVDLTAMNSSTPEMISTSLSHICQILILVSHYLSIRLPAAITLPHRDYPRPTIFNLSASYRPGDPVFPSQASVSSPSSTTDTESQRVSRPRPLFIDKPLSQLAKEDPATFSYFIEGVTLLAYNIAWACNTQGVSIGDKALFEDMSNMGRNLYNLLINHQSAGKDPDTLKNEADGQTSRFGQYSHGTTFYHLGGAEGTEFSKTFKLPSPMKLADKLKKKLLSEAPTPDWEVLDDDAWKVEEELADGSQVNKNLLMGDKSSPRRGTSGWMRVKNR</sequence>
<gene>
    <name evidence="5" type="primary">ATG14</name>
    <name type="ORF">FG00675</name>
    <name type="ORF">FGRAMPH1_01T01699</name>
</gene>
<dbReference type="EMBL" id="HG970332">
    <property type="protein sequence ID" value="CEF72650.1"/>
    <property type="molecule type" value="Genomic_DNA"/>
</dbReference>
<dbReference type="RefSeq" id="XP_011316371.1">
    <property type="nucleotide sequence ID" value="XM_011318069.1"/>
</dbReference>
<dbReference type="SMR" id="I1RAY1"/>
<dbReference type="KEGG" id="fgr:FGSG_00675"/>
<dbReference type="VEuPathDB" id="FungiDB:FGRAMPH1_01G01699"/>
<dbReference type="eggNOG" id="ENOG502S2VB">
    <property type="taxonomic scope" value="Eukaryota"/>
</dbReference>
<dbReference type="HOGENOM" id="CLU_021590_1_0_1"/>
<dbReference type="InParanoid" id="I1RAY1"/>
<dbReference type="OrthoDB" id="85015at110618"/>
<dbReference type="Proteomes" id="UP000070720">
    <property type="component" value="Chromosome 1"/>
</dbReference>
<dbReference type="GO" id="GO:0005768">
    <property type="term" value="C:endosome"/>
    <property type="evidence" value="ECO:0007669"/>
    <property type="project" value="TreeGrafter"/>
</dbReference>
<dbReference type="GO" id="GO:0000323">
    <property type="term" value="C:lytic vacuole"/>
    <property type="evidence" value="ECO:0007669"/>
    <property type="project" value="TreeGrafter"/>
</dbReference>
<dbReference type="GO" id="GO:0034045">
    <property type="term" value="C:phagophore assembly site membrane"/>
    <property type="evidence" value="ECO:0007669"/>
    <property type="project" value="UniProtKB-SubCell"/>
</dbReference>
<dbReference type="GO" id="GO:0032991">
    <property type="term" value="C:protein-containing complex"/>
    <property type="evidence" value="ECO:0007669"/>
    <property type="project" value="UniProtKB-ARBA"/>
</dbReference>
<dbReference type="GO" id="GO:0005774">
    <property type="term" value="C:vacuolar membrane"/>
    <property type="evidence" value="ECO:0007669"/>
    <property type="project" value="UniProtKB-SubCell"/>
</dbReference>
<dbReference type="GO" id="GO:0000149">
    <property type="term" value="F:SNARE binding"/>
    <property type="evidence" value="ECO:0007669"/>
    <property type="project" value="TreeGrafter"/>
</dbReference>
<dbReference type="GO" id="GO:0006914">
    <property type="term" value="P:autophagy"/>
    <property type="evidence" value="ECO:0007669"/>
    <property type="project" value="UniProtKB-KW"/>
</dbReference>
<dbReference type="GO" id="GO:0015031">
    <property type="term" value="P:protein transport"/>
    <property type="evidence" value="ECO:0007669"/>
    <property type="project" value="UniProtKB-KW"/>
</dbReference>
<dbReference type="GO" id="GO:0035493">
    <property type="term" value="P:SNARE complex assembly"/>
    <property type="evidence" value="ECO:0007669"/>
    <property type="project" value="TreeGrafter"/>
</dbReference>
<dbReference type="InterPro" id="IPR018791">
    <property type="entry name" value="UV_resistance/autophagy_Atg14"/>
</dbReference>
<dbReference type="PANTHER" id="PTHR15157:SF13">
    <property type="entry name" value="AUTOPHAGY-RELATED PROTEIN 14"/>
    <property type="match status" value="1"/>
</dbReference>
<dbReference type="PANTHER" id="PTHR15157">
    <property type="entry name" value="UV RADIATION RESISTANCE-ASSOCIATED GENE PROTEIN"/>
    <property type="match status" value="1"/>
</dbReference>
<dbReference type="Pfam" id="PF10186">
    <property type="entry name" value="ATG14"/>
    <property type="match status" value="1"/>
</dbReference>
<accession>I1RAY1</accession>
<accession>A0A098D2G7</accession>
<keyword id="KW-0072">Autophagy</keyword>
<keyword id="KW-0175">Coiled coil</keyword>
<keyword id="KW-0472">Membrane</keyword>
<keyword id="KW-0653">Protein transport</keyword>
<keyword id="KW-1185">Reference proteome</keyword>
<keyword id="KW-0813">Transport</keyword>
<keyword id="KW-0926">Vacuole</keyword>
<reference key="1">
    <citation type="journal article" date="2007" name="Science">
        <title>The Fusarium graminearum genome reveals a link between localized polymorphism and pathogen specialization.</title>
        <authorList>
            <person name="Cuomo C.A."/>
            <person name="Gueldener U."/>
            <person name="Xu J.-R."/>
            <person name="Trail F."/>
            <person name="Turgeon B.G."/>
            <person name="Di Pietro A."/>
            <person name="Walton J.D."/>
            <person name="Ma L.-J."/>
            <person name="Baker S.E."/>
            <person name="Rep M."/>
            <person name="Adam G."/>
            <person name="Antoniw J."/>
            <person name="Baldwin T."/>
            <person name="Calvo S.E."/>
            <person name="Chang Y.-L."/>
            <person name="DeCaprio D."/>
            <person name="Gale L.R."/>
            <person name="Gnerre S."/>
            <person name="Goswami R.S."/>
            <person name="Hammond-Kosack K."/>
            <person name="Harris L.J."/>
            <person name="Hilburn K."/>
            <person name="Kennell J.C."/>
            <person name="Kroken S."/>
            <person name="Magnuson J.K."/>
            <person name="Mannhaupt G."/>
            <person name="Mauceli E.W."/>
            <person name="Mewes H.-W."/>
            <person name="Mitterbauer R."/>
            <person name="Muehlbauer G."/>
            <person name="Muensterkoetter M."/>
            <person name="Nelson D."/>
            <person name="O'Donnell K."/>
            <person name="Ouellet T."/>
            <person name="Qi W."/>
            <person name="Quesneville H."/>
            <person name="Roncero M.I.G."/>
            <person name="Seong K.-Y."/>
            <person name="Tetko I.V."/>
            <person name="Urban M."/>
            <person name="Waalwijk C."/>
            <person name="Ward T.J."/>
            <person name="Yao J."/>
            <person name="Birren B.W."/>
            <person name="Kistler H.C."/>
        </authorList>
    </citation>
    <scope>NUCLEOTIDE SEQUENCE [LARGE SCALE GENOMIC DNA]</scope>
    <source>
        <strain>ATCC MYA-4620 / CBS 123657 / FGSC 9075 / NRRL 31084 / PH-1</strain>
    </source>
</reference>
<reference key="2">
    <citation type="journal article" date="2010" name="Nature">
        <title>Comparative genomics reveals mobile pathogenicity chromosomes in Fusarium.</title>
        <authorList>
            <person name="Ma L.-J."/>
            <person name="van der Does H.C."/>
            <person name="Borkovich K.A."/>
            <person name="Coleman J.J."/>
            <person name="Daboussi M.-J."/>
            <person name="Di Pietro A."/>
            <person name="Dufresne M."/>
            <person name="Freitag M."/>
            <person name="Grabherr M."/>
            <person name="Henrissat B."/>
            <person name="Houterman P.M."/>
            <person name="Kang S."/>
            <person name="Shim W.-B."/>
            <person name="Woloshuk C."/>
            <person name="Xie X."/>
            <person name="Xu J.-R."/>
            <person name="Antoniw J."/>
            <person name="Baker S.E."/>
            <person name="Bluhm B.H."/>
            <person name="Breakspear A."/>
            <person name="Brown D.W."/>
            <person name="Butchko R.A.E."/>
            <person name="Chapman S."/>
            <person name="Coulson R."/>
            <person name="Coutinho P.M."/>
            <person name="Danchin E.G.J."/>
            <person name="Diener A."/>
            <person name="Gale L.R."/>
            <person name="Gardiner D.M."/>
            <person name="Goff S."/>
            <person name="Hammond-Kosack K.E."/>
            <person name="Hilburn K."/>
            <person name="Hua-Van A."/>
            <person name="Jonkers W."/>
            <person name="Kazan K."/>
            <person name="Kodira C.D."/>
            <person name="Koehrsen M."/>
            <person name="Kumar L."/>
            <person name="Lee Y.-H."/>
            <person name="Li L."/>
            <person name="Manners J.M."/>
            <person name="Miranda-Saavedra D."/>
            <person name="Mukherjee M."/>
            <person name="Park G."/>
            <person name="Park J."/>
            <person name="Park S.-Y."/>
            <person name="Proctor R.H."/>
            <person name="Regev A."/>
            <person name="Ruiz-Roldan M.C."/>
            <person name="Sain D."/>
            <person name="Sakthikumar S."/>
            <person name="Sykes S."/>
            <person name="Schwartz D.C."/>
            <person name="Turgeon B.G."/>
            <person name="Wapinski I."/>
            <person name="Yoder O."/>
            <person name="Young S."/>
            <person name="Zeng Q."/>
            <person name="Zhou S."/>
            <person name="Galagan J."/>
            <person name="Cuomo C.A."/>
            <person name="Kistler H.C."/>
            <person name="Rep M."/>
        </authorList>
    </citation>
    <scope>GENOME REANNOTATION</scope>
    <source>
        <strain>ATCC MYA-4620 / CBS 123657 / FGSC 9075 / NRRL 31084 / PH-1</strain>
    </source>
</reference>
<reference key="3">
    <citation type="journal article" date="2015" name="BMC Genomics">
        <title>The completed genome sequence of the pathogenic ascomycete fungus Fusarium graminearum.</title>
        <authorList>
            <person name="King R."/>
            <person name="Urban M."/>
            <person name="Hammond-Kosack M.C.U."/>
            <person name="Hassani-Pak K."/>
            <person name="Hammond-Kosack K.E."/>
        </authorList>
    </citation>
    <scope>NUCLEOTIDE SEQUENCE [LARGE SCALE GENOMIC DNA]</scope>
    <source>
        <strain>ATCC MYA-4620 / CBS 123657 / FGSC 9075 / NRRL 31084 / PH-1</strain>
    </source>
</reference>
<reference key="4">
    <citation type="journal article" date="2017" name="Sci. Rep.">
        <title>Genome-wide functional analysis reveals that autophagy is necessary for growth, sporulation, deoxynivalenol production and virulence in Fusarium graminearum.</title>
        <authorList>
            <person name="Lv W."/>
            <person name="Wang C."/>
            <person name="Yang N."/>
            <person name="Que Y."/>
            <person name="Talbot N.J."/>
            <person name="Wang Z."/>
        </authorList>
    </citation>
    <scope>IDENTIFICATION</scope>
    <scope>FUNCTION</scope>
    <scope>DISRUPTION PHENOTYPE</scope>
</reference>
<proteinExistence type="inferred from homology"/>
<protein>
    <recommendedName>
        <fullName evidence="5">Autophagy-related protein 14</fullName>
    </recommendedName>
</protein>
<feature type="chain" id="PRO_0000443910" description="Autophagy-related protein 14">
    <location>
        <begin position="1"/>
        <end position="457"/>
    </location>
</feature>
<feature type="region of interest" description="Disordered" evidence="3">
    <location>
        <begin position="54"/>
        <end position="73"/>
    </location>
</feature>
<feature type="region of interest" description="Disordered" evidence="3">
    <location>
        <begin position="252"/>
        <end position="274"/>
    </location>
</feature>
<feature type="region of interest" description="Disordered" evidence="3">
    <location>
        <begin position="433"/>
        <end position="457"/>
    </location>
</feature>
<feature type="coiled-coil region" evidence="2">
    <location>
        <begin position="31"/>
        <end position="109"/>
    </location>
</feature>
<feature type="compositionally biased region" description="Low complexity" evidence="3">
    <location>
        <begin position="253"/>
        <end position="266"/>
    </location>
</feature>
<evidence type="ECO:0000250" key="1">
    <source>
        <dbReference type="UniProtKB" id="P38270"/>
    </source>
</evidence>
<evidence type="ECO:0000255" key="2"/>
<evidence type="ECO:0000256" key="3">
    <source>
        <dbReference type="SAM" id="MobiDB-lite"/>
    </source>
</evidence>
<evidence type="ECO:0000269" key="4">
    <source>
    </source>
</evidence>
<evidence type="ECO:0000303" key="5">
    <source>
    </source>
</evidence>
<evidence type="ECO:0000305" key="6"/>
<organism>
    <name type="scientific">Gibberella zeae (strain ATCC MYA-4620 / CBS 123657 / FGSC 9075 / NRRL 31084 / PH-1)</name>
    <name type="common">Wheat head blight fungus</name>
    <name type="synonym">Fusarium graminearum</name>
    <dbReference type="NCBI Taxonomy" id="229533"/>
    <lineage>
        <taxon>Eukaryota</taxon>
        <taxon>Fungi</taxon>
        <taxon>Dikarya</taxon>
        <taxon>Ascomycota</taxon>
        <taxon>Pezizomycotina</taxon>
        <taxon>Sordariomycetes</taxon>
        <taxon>Hypocreomycetidae</taxon>
        <taxon>Hypocreales</taxon>
        <taxon>Nectriaceae</taxon>
        <taxon>Fusarium</taxon>
    </lineage>
</organism>
<comment type="function">
    <text evidence="1 4">Required for cytoplasm to vacuole transport (Cvt) and autophagy as a part of the autophagy-specific VPS34 PI3-kinase complex I (By similarity). This complex is essential to recruit the ATG8-phosphatidylinositol conjugate and the ATG12-ATG5 conjugate to the pre-autophagosomal structure (By similarity). ATG14 mediates the specific binding of the VPS34 PI3-kinase complex I to the preautophagosomal structure (PAS) (By similarity). Autophagy is required for proper vegetative growth, asexual/sexual reproduction, and full virulence (PubMed:28894236). Autophagy is particularly involved in the biosynthesis of deoxynivalenol (DON), an important virulence determinant (PubMed:28894236).</text>
</comment>
<comment type="subunit">
    <text evidence="1">Component of the autophagy-specific VPS34 PI3-kinase complex I (By similarity).</text>
</comment>
<comment type="subcellular location">
    <subcellularLocation>
        <location evidence="1">Preautophagosomal structure membrane</location>
        <topology evidence="1">Peripheral membrane protein</topology>
    </subcellularLocation>
    <subcellularLocation>
        <location evidence="1">Vacuole membrane</location>
        <topology evidence="1">Peripheral membrane protein</topology>
    </subcellularLocation>
</comment>
<comment type="domain">
    <text evidence="1">Coiled-Coils at the N-terminal half are essential for autophagy (By similarity).</text>
</comment>
<comment type="disruption phenotype">
    <text evidence="4">Significantly decreases the radial growth of colonies under nutrient-rich conditions (PubMed:28894236). Strongly reduces conidiation (PubMed:28894236). Causes only mild infection in point-inoculated spikelets of flowering wheat heads and impairs the spreading to nearby spikelets (PubMed:28894236).</text>
</comment>
<comment type="similarity">
    <text evidence="6">Belongs to the ATG14 family.</text>
</comment>